<dbReference type="EC" id="2.7.1.11" evidence="1"/>
<dbReference type="EMBL" id="CP000033">
    <property type="protein sequence ID" value="AAV42808.1"/>
    <property type="molecule type" value="Genomic_DNA"/>
</dbReference>
<dbReference type="RefSeq" id="WP_003547070.1">
    <property type="nucleotide sequence ID" value="NC_006814.3"/>
</dbReference>
<dbReference type="RefSeq" id="YP_193839.1">
    <property type="nucleotide sequence ID" value="NC_006814.3"/>
</dbReference>
<dbReference type="SMR" id="Q5FKG6"/>
<dbReference type="STRING" id="272621.LBA0956"/>
<dbReference type="GeneID" id="93289929"/>
<dbReference type="KEGG" id="lac:LBA0956"/>
<dbReference type="PATRIC" id="fig|272621.13.peg.908"/>
<dbReference type="eggNOG" id="COG0205">
    <property type="taxonomic scope" value="Bacteria"/>
</dbReference>
<dbReference type="HOGENOM" id="CLU_020655_0_1_9"/>
<dbReference type="OrthoDB" id="9802503at2"/>
<dbReference type="BioCyc" id="LACI272621:G1G49-958-MONOMER"/>
<dbReference type="SABIO-RK" id="Q5FKG6"/>
<dbReference type="UniPathway" id="UPA00109">
    <property type="reaction ID" value="UER00182"/>
</dbReference>
<dbReference type="Proteomes" id="UP000006381">
    <property type="component" value="Chromosome"/>
</dbReference>
<dbReference type="GO" id="GO:0005945">
    <property type="term" value="C:6-phosphofructokinase complex"/>
    <property type="evidence" value="ECO:0007669"/>
    <property type="project" value="TreeGrafter"/>
</dbReference>
<dbReference type="GO" id="GO:0003872">
    <property type="term" value="F:6-phosphofructokinase activity"/>
    <property type="evidence" value="ECO:0007669"/>
    <property type="project" value="UniProtKB-UniRule"/>
</dbReference>
<dbReference type="GO" id="GO:0016208">
    <property type="term" value="F:AMP binding"/>
    <property type="evidence" value="ECO:0007669"/>
    <property type="project" value="TreeGrafter"/>
</dbReference>
<dbReference type="GO" id="GO:0005524">
    <property type="term" value="F:ATP binding"/>
    <property type="evidence" value="ECO:0007669"/>
    <property type="project" value="UniProtKB-KW"/>
</dbReference>
<dbReference type="GO" id="GO:0070095">
    <property type="term" value="F:fructose-6-phosphate binding"/>
    <property type="evidence" value="ECO:0007669"/>
    <property type="project" value="TreeGrafter"/>
</dbReference>
<dbReference type="GO" id="GO:0042802">
    <property type="term" value="F:identical protein binding"/>
    <property type="evidence" value="ECO:0007669"/>
    <property type="project" value="TreeGrafter"/>
</dbReference>
<dbReference type="GO" id="GO:0046872">
    <property type="term" value="F:metal ion binding"/>
    <property type="evidence" value="ECO:0007669"/>
    <property type="project" value="UniProtKB-KW"/>
</dbReference>
<dbReference type="GO" id="GO:0048029">
    <property type="term" value="F:monosaccharide binding"/>
    <property type="evidence" value="ECO:0007669"/>
    <property type="project" value="TreeGrafter"/>
</dbReference>
<dbReference type="GO" id="GO:0061621">
    <property type="term" value="P:canonical glycolysis"/>
    <property type="evidence" value="ECO:0007669"/>
    <property type="project" value="TreeGrafter"/>
</dbReference>
<dbReference type="GO" id="GO:0030388">
    <property type="term" value="P:fructose 1,6-bisphosphate metabolic process"/>
    <property type="evidence" value="ECO:0007669"/>
    <property type="project" value="TreeGrafter"/>
</dbReference>
<dbReference type="GO" id="GO:0006002">
    <property type="term" value="P:fructose 6-phosphate metabolic process"/>
    <property type="evidence" value="ECO:0007669"/>
    <property type="project" value="InterPro"/>
</dbReference>
<dbReference type="CDD" id="cd00763">
    <property type="entry name" value="Bacterial_PFK"/>
    <property type="match status" value="1"/>
</dbReference>
<dbReference type="FunFam" id="3.40.50.450:FF:000001">
    <property type="entry name" value="ATP-dependent 6-phosphofructokinase"/>
    <property type="match status" value="1"/>
</dbReference>
<dbReference type="FunFam" id="3.40.50.460:FF:000002">
    <property type="entry name" value="ATP-dependent 6-phosphofructokinase"/>
    <property type="match status" value="1"/>
</dbReference>
<dbReference type="Gene3D" id="3.40.50.450">
    <property type="match status" value="1"/>
</dbReference>
<dbReference type="Gene3D" id="3.40.50.460">
    <property type="entry name" value="Phosphofructokinase domain"/>
    <property type="match status" value="1"/>
</dbReference>
<dbReference type="HAMAP" id="MF_00339">
    <property type="entry name" value="Phosphofructokinase_I_B1"/>
    <property type="match status" value="1"/>
</dbReference>
<dbReference type="InterPro" id="IPR022953">
    <property type="entry name" value="ATP_PFK"/>
</dbReference>
<dbReference type="InterPro" id="IPR012003">
    <property type="entry name" value="ATP_PFK_prok-type"/>
</dbReference>
<dbReference type="InterPro" id="IPR012828">
    <property type="entry name" value="PFKA_ATP_prok"/>
</dbReference>
<dbReference type="InterPro" id="IPR015912">
    <property type="entry name" value="Phosphofructokinase_CS"/>
</dbReference>
<dbReference type="InterPro" id="IPR000023">
    <property type="entry name" value="Phosphofructokinase_dom"/>
</dbReference>
<dbReference type="InterPro" id="IPR035966">
    <property type="entry name" value="PKF_sf"/>
</dbReference>
<dbReference type="NCBIfam" id="TIGR02482">
    <property type="entry name" value="PFKA_ATP"/>
    <property type="match status" value="1"/>
</dbReference>
<dbReference type="NCBIfam" id="NF002872">
    <property type="entry name" value="PRK03202.1"/>
    <property type="match status" value="1"/>
</dbReference>
<dbReference type="PANTHER" id="PTHR13697:SF4">
    <property type="entry name" value="ATP-DEPENDENT 6-PHOSPHOFRUCTOKINASE"/>
    <property type="match status" value="1"/>
</dbReference>
<dbReference type="PANTHER" id="PTHR13697">
    <property type="entry name" value="PHOSPHOFRUCTOKINASE"/>
    <property type="match status" value="1"/>
</dbReference>
<dbReference type="Pfam" id="PF00365">
    <property type="entry name" value="PFK"/>
    <property type="match status" value="1"/>
</dbReference>
<dbReference type="PIRSF" id="PIRSF000532">
    <property type="entry name" value="ATP_PFK_prok"/>
    <property type="match status" value="1"/>
</dbReference>
<dbReference type="PRINTS" id="PR00476">
    <property type="entry name" value="PHFRCTKINASE"/>
</dbReference>
<dbReference type="SUPFAM" id="SSF53784">
    <property type="entry name" value="Phosphofructokinase"/>
    <property type="match status" value="1"/>
</dbReference>
<dbReference type="PROSITE" id="PS00433">
    <property type="entry name" value="PHOSPHOFRUCTOKINASE"/>
    <property type="match status" value="1"/>
</dbReference>
<accession>Q5FKG6</accession>
<protein>
    <recommendedName>
        <fullName evidence="1">ATP-dependent 6-phosphofructokinase</fullName>
        <shortName evidence="1">ATP-PFK</shortName>
        <shortName evidence="1">Phosphofructokinase</shortName>
        <ecNumber evidence="1">2.7.1.11</ecNumber>
    </recommendedName>
    <alternativeName>
        <fullName evidence="1">Phosphohexokinase</fullName>
    </alternativeName>
</protein>
<name>PFKA_LACAC</name>
<feature type="chain" id="PRO_1000059769" description="ATP-dependent 6-phosphofructokinase">
    <location>
        <begin position="1"/>
        <end position="320"/>
    </location>
</feature>
<feature type="active site" description="Proton acceptor" evidence="1">
    <location>
        <position position="127"/>
    </location>
</feature>
<feature type="binding site" evidence="1">
    <location>
        <position position="11"/>
    </location>
    <ligand>
        <name>ATP</name>
        <dbReference type="ChEBI" id="CHEBI:30616"/>
    </ligand>
</feature>
<feature type="binding site" evidence="1">
    <location>
        <begin position="21"/>
        <end position="25"/>
    </location>
    <ligand>
        <name>ADP</name>
        <dbReference type="ChEBI" id="CHEBI:456216"/>
        <note>allosteric activator; ligand shared between dimeric partners</note>
    </ligand>
</feature>
<feature type="binding site" evidence="1">
    <location>
        <begin position="72"/>
        <end position="73"/>
    </location>
    <ligand>
        <name>ATP</name>
        <dbReference type="ChEBI" id="CHEBI:30616"/>
    </ligand>
</feature>
<feature type="binding site" evidence="1">
    <location>
        <begin position="102"/>
        <end position="105"/>
    </location>
    <ligand>
        <name>ATP</name>
        <dbReference type="ChEBI" id="CHEBI:30616"/>
    </ligand>
</feature>
<feature type="binding site" evidence="1">
    <location>
        <position position="103"/>
    </location>
    <ligand>
        <name>Mg(2+)</name>
        <dbReference type="ChEBI" id="CHEBI:18420"/>
        <note>catalytic</note>
    </ligand>
</feature>
<feature type="binding site" description="in other chain" evidence="1">
    <location>
        <begin position="125"/>
        <end position="127"/>
    </location>
    <ligand>
        <name>substrate</name>
        <note>ligand shared between dimeric partners</note>
    </ligand>
</feature>
<feature type="binding site" description="in other chain" evidence="1">
    <location>
        <position position="154"/>
    </location>
    <ligand>
        <name>ADP</name>
        <dbReference type="ChEBI" id="CHEBI:456216"/>
        <note>allosteric activator; ligand shared between dimeric partners</note>
    </ligand>
</feature>
<feature type="binding site" evidence="1">
    <location>
        <position position="162"/>
    </location>
    <ligand>
        <name>substrate</name>
        <note>ligand shared between dimeric partners</note>
    </ligand>
</feature>
<feature type="binding site" description="in other chain" evidence="1">
    <location>
        <begin position="169"/>
        <end position="171"/>
    </location>
    <ligand>
        <name>substrate</name>
        <note>ligand shared between dimeric partners</note>
    </ligand>
</feature>
<feature type="binding site" description="in other chain" evidence="1">
    <location>
        <begin position="185"/>
        <end position="187"/>
    </location>
    <ligand>
        <name>ADP</name>
        <dbReference type="ChEBI" id="CHEBI:456216"/>
        <note>allosteric activator; ligand shared between dimeric partners</note>
    </ligand>
</feature>
<feature type="binding site" description="in other chain" evidence="1">
    <location>
        <begin position="213"/>
        <end position="215"/>
    </location>
    <ligand>
        <name>ADP</name>
        <dbReference type="ChEBI" id="CHEBI:456216"/>
        <note>allosteric activator; ligand shared between dimeric partners</note>
    </ligand>
</feature>
<feature type="binding site" description="in other chain" evidence="1">
    <location>
        <position position="222"/>
    </location>
    <ligand>
        <name>substrate</name>
        <note>ligand shared between dimeric partners</note>
    </ligand>
</feature>
<feature type="binding site" evidence="1">
    <location>
        <position position="243"/>
    </location>
    <ligand>
        <name>substrate</name>
        <note>ligand shared between dimeric partners</note>
    </ligand>
</feature>
<feature type="binding site" description="in other chain" evidence="1">
    <location>
        <begin position="249"/>
        <end position="252"/>
    </location>
    <ligand>
        <name>substrate</name>
        <note>ligand shared between dimeric partners</note>
    </ligand>
</feature>
<reference key="1">
    <citation type="journal article" date="2005" name="Proc. Natl. Acad. Sci. U.S.A.">
        <title>Complete genome sequence of the probiotic lactic acid bacterium Lactobacillus acidophilus NCFM.</title>
        <authorList>
            <person name="Altermann E."/>
            <person name="Russell W.M."/>
            <person name="Azcarate-Peril M.A."/>
            <person name="Barrangou R."/>
            <person name="Buck B.L."/>
            <person name="McAuliffe O."/>
            <person name="Souther N."/>
            <person name="Dobson A."/>
            <person name="Duong T."/>
            <person name="Callanan M."/>
            <person name="Lick S."/>
            <person name="Hamrick A."/>
            <person name="Cano R."/>
            <person name="Klaenhammer T.R."/>
        </authorList>
    </citation>
    <scope>NUCLEOTIDE SEQUENCE [LARGE SCALE GENOMIC DNA]</scope>
    <source>
        <strain>ATCC 700396 / NCK56 / N2 / NCFM</strain>
    </source>
</reference>
<keyword id="KW-0021">Allosteric enzyme</keyword>
<keyword id="KW-0067">ATP-binding</keyword>
<keyword id="KW-0963">Cytoplasm</keyword>
<keyword id="KW-0324">Glycolysis</keyword>
<keyword id="KW-0418">Kinase</keyword>
<keyword id="KW-0460">Magnesium</keyword>
<keyword id="KW-0479">Metal-binding</keyword>
<keyword id="KW-0547">Nucleotide-binding</keyword>
<keyword id="KW-1185">Reference proteome</keyword>
<keyword id="KW-0808">Transferase</keyword>
<comment type="function">
    <text evidence="1">Catalyzes the phosphorylation of D-fructose 6-phosphate to fructose 1,6-bisphosphate by ATP, the first committing step of glycolysis.</text>
</comment>
<comment type="catalytic activity">
    <reaction evidence="1">
        <text>beta-D-fructose 6-phosphate + ATP = beta-D-fructose 1,6-bisphosphate + ADP + H(+)</text>
        <dbReference type="Rhea" id="RHEA:16109"/>
        <dbReference type="ChEBI" id="CHEBI:15378"/>
        <dbReference type="ChEBI" id="CHEBI:30616"/>
        <dbReference type="ChEBI" id="CHEBI:32966"/>
        <dbReference type="ChEBI" id="CHEBI:57634"/>
        <dbReference type="ChEBI" id="CHEBI:456216"/>
        <dbReference type="EC" id="2.7.1.11"/>
    </reaction>
</comment>
<comment type="cofactor">
    <cofactor evidence="1">
        <name>Mg(2+)</name>
        <dbReference type="ChEBI" id="CHEBI:18420"/>
    </cofactor>
</comment>
<comment type="activity regulation">
    <text evidence="1">Allosterically activated by ADP and other diphosphonucleosides, and allosterically inhibited by phosphoenolpyruvate.</text>
</comment>
<comment type="pathway">
    <text evidence="1">Carbohydrate degradation; glycolysis; D-glyceraldehyde 3-phosphate and glycerone phosphate from D-glucose: step 3/4.</text>
</comment>
<comment type="subunit">
    <text evidence="1">Homotetramer.</text>
</comment>
<comment type="subcellular location">
    <subcellularLocation>
        <location evidence="1">Cytoplasm</location>
    </subcellularLocation>
</comment>
<comment type="similarity">
    <text evidence="1">Belongs to the phosphofructokinase type A (PFKA) family. ATP-dependent PFK group I subfamily. Prokaryotic clade 'B1' sub-subfamily.</text>
</comment>
<sequence>MKRIGILTSGGDAPGMNAAIRAVTKTAIHHGLEVFGIRYGFAGLVAGDFIPLTTENVDHKISEGGTFLYSARFPEFAQEEVQQKGVEQLKKHGIDAVIVIGGDGSYHGALALTRHGVNSVGLPGTIDNDIPYTDYTIGFDSACRTAMDAIDKIRDTASSHHRVFVVNVMGRECGDIAMRVGVASGADAIVIPERPYDVKEIAETIKRGFADGKDHGIIVLAEGVMDAEEFKDELLKYGDFDARANVLAHMQRGGSPTVEDRVNATKMGNYAVNLLLDGKGGLAVGMENGKLNTHDILDLFDSKHQGDFSLLDVNEEMTKD</sequence>
<evidence type="ECO:0000255" key="1">
    <source>
        <dbReference type="HAMAP-Rule" id="MF_00339"/>
    </source>
</evidence>
<proteinExistence type="inferred from homology"/>
<gene>
    <name evidence="1" type="primary">pfkA</name>
    <name type="ordered locus">LBA0956</name>
</gene>
<organism>
    <name type="scientific">Lactobacillus acidophilus (strain ATCC 700396 / NCK56 / N2 / NCFM)</name>
    <dbReference type="NCBI Taxonomy" id="272621"/>
    <lineage>
        <taxon>Bacteria</taxon>
        <taxon>Bacillati</taxon>
        <taxon>Bacillota</taxon>
        <taxon>Bacilli</taxon>
        <taxon>Lactobacillales</taxon>
        <taxon>Lactobacillaceae</taxon>
        <taxon>Lactobacillus</taxon>
    </lineage>
</organism>